<accession>O05391</accession>
<evidence type="ECO:0000269" key="1">
    <source>
    </source>
</evidence>
<evidence type="ECO:0000305" key="2"/>
<evidence type="ECO:0007829" key="3">
    <source>
        <dbReference type="PDB" id="2BW2"/>
    </source>
</evidence>
<evidence type="ECO:0007829" key="4">
    <source>
        <dbReference type="PDB" id="7XT1"/>
    </source>
</evidence>
<feature type="signal peptide" evidence="2">
    <location>
        <begin position="1"/>
        <end position="30"/>
    </location>
</feature>
<feature type="chain" id="PRO_0000020824" description="Protein BofC">
    <location>
        <begin position="31"/>
        <end position="170"/>
    </location>
</feature>
<feature type="sequence variant" description="In BofC1.">
    <original>S</original>
    <variation>F</variation>
    <location>
        <position position="96"/>
    </location>
</feature>
<feature type="strand" evidence="4">
    <location>
        <begin position="39"/>
        <end position="48"/>
    </location>
</feature>
<feature type="strand" evidence="3">
    <location>
        <begin position="50"/>
        <end position="52"/>
    </location>
</feature>
<feature type="strand" evidence="4">
    <location>
        <begin position="54"/>
        <end position="64"/>
    </location>
</feature>
<feature type="helix" evidence="4">
    <location>
        <begin position="66"/>
        <end position="72"/>
    </location>
</feature>
<feature type="turn" evidence="4">
    <location>
        <begin position="73"/>
        <end position="75"/>
    </location>
</feature>
<feature type="strand" evidence="4">
    <location>
        <begin position="76"/>
        <end position="82"/>
    </location>
</feature>
<feature type="strand" evidence="4">
    <location>
        <begin position="85"/>
        <end position="91"/>
    </location>
</feature>
<feature type="helix" evidence="4">
    <location>
        <begin position="99"/>
        <end position="102"/>
    </location>
</feature>
<feature type="strand" evidence="4">
    <location>
        <begin position="103"/>
        <end position="108"/>
    </location>
</feature>
<feature type="turn" evidence="4">
    <location>
        <begin position="109"/>
        <end position="111"/>
    </location>
</feature>
<feature type="strand" evidence="4">
    <location>
        <begin position="112"/>
        <end position="119"/>
    </location>
</feature>
<feature type="strand" evidence="4">
    <location>
        <begin position="126"/>
        <end position="132"/>
    </location>
</feature>
<feature type="helix" evidence="4">
    <location>
        <begin position="135"/>
        <end position="137"/>
    </location>
</feature>
<feature type="helix" evidence="4">
    <location>
        <begin position="140"/>
        <end position="148"/>
    </location>
</feature>
<feature type="helix" evidence="4">
    <location>
        <begin position="155"/>
        <end position="166"/>
    </location>
</feature>
<sequence length="170" mass="19296">MKRFSTAYLLLGILCSAAVFLIGAPSRALGAEVEHYEPLQVHVQLEKVYLDGDVSIEHKHEKVFSMDDFWAAYAGWTLVEQKKGYVLFRKQMDDISPLSKVNGYIGVSDNGVISTFHGRPEPASEPIQSFFQIDLERLESHMQKNLLKGIPFRTKAEFEDVIEHMKTYSG</sequence>
<comment type="function">
    <text>Inhibits the SpoIVB zymogen from undergoing autocatalytic activation by an unknown mechanism, and in this way plays a role in the sigma-K checkpoint of sporulation.</text>
</comment>
<comment type="subunit">
    <text evidence="1">Monomer.</text>
</comment>
<comment type="subcellular location">
    <subcellularLocation>
        <location>Forespore intermembrane space</location>
    </subcellularLocation>
</comment>
<dbReference type="EMBL" id="X93081">
    <property type="protein sequence ID" value="CAA63621.1"/>
    <property type="molecule type" value="Genomic_DNA"/>
</dbReference>
<dbReference type="EMBL" id="Y15896">
    <property type="protein sequence ID" value="CAB75329.1"/>
    <property type="molecule type" value="Genomic_DNA"/>
</dbReference>
<dbReference type="EMBL" id="AL009126">
    <property type="protein sequence ID" value="CAB14735.1"/>
    <property type="molecule type" value="Genomic_DNA"/>
</dbReference>
<dbReference type="PIR" id="A69596">
    <property type="entry name" value="A69596"/>
</dbReference>
<dbReference type="RefSeq" id="NP_390653.1">
    <property type="nucleotide sequence ID" value="NC_000964.3"/>
</dbReference>
<dbReference type="RefSeq" id="WP_003229715.1">
    <property type="nucleotide sequence ID" value="NZ_OZ025638.1"/>
</dbReference>
<dbReference type="PDB" id="2BW2">
    <property type="method" value="NMR"/>
    <property type="chains" value="A=31-170"/>
</dbReference>
<dbReference type="PDB" id="7XT1">
    <property type="method" value="X-ray"/>
    <property type="resolution" value="1.98 A"/>
    <property type="chains" value="A=2-170"/>
</dbReference>
<dbReference type="PDBsum" id="2BW2"/>
<dbReference type="PDBsum" id="7XT1"/>
<dbReference type="BMRB" id="O05391"/>
<dbReference type="SMR" id="O05391"/>
<dbReference type="FunCoup" id="O05391">
    <property type="interactions" value="9"/>
</dbReference>
<dbReference type="STRING" id="224308.BSU27750"/>
<dbReference type="PaxDb" id="224308-BSU27750"/>
<dbReference type="DNASU" id="937526"/>
<dbReference type="EnsemblBacteria" id="CAB14735">
    <property type="protein sequence ID" value="CAB14735"/>
    <property type="gene ID" value="BSU_27750"/>
</dbReference>
<dbReference type="GeneID" id="937526"/>
<dbReference type="KEGG" id="bsu:BSU27750"/>
<dbReference type="PATRIC" id="fig|224308.179.peg.3015"/>
<dbReference type="eggNOG" id="ENOG5032U7R">
    <property type="taxonomic scope" value="Bacteria"/>
</dbReference>
<dbReference type="InParanoid" id="O05391"/>
<dbReference type="OrthoDB" id="2678751at2"/>
<dbReference type="BioCyc" id="BSUB:BSU27750-MONOMER"/>
<dbReference type="EvolutionaryTrace" id="O05391"/>
<dbReference type="Proteomes" id="UP000001570">
    <property type="component" value="Chromosome"/>
</dbReference>
<dbReference type="GO" id="GO:0030435">
    <property type="term" value="P:sporulation resulting in formation of a cellular spore"/>
    <property type="evidence" value="ECO:0007669"/>
    <property type="project" value="UniProtKB-KW"/>
</dbReference>
<dbReference type="Gene3D" id="3.30.70.1740">
    <property type="entry name" value="Bypass-of-forespore C, C-terminal domain"/>
    <property type="match status" value="1"/>
</dbReference>
<dbReference type="Gene3D" id="3.10.20.420">
    <property type="entry name" value="Bypass-of-forespore C, N-terminal domain"/>
    <property type="match status" value="1"/>
</dbReference>
<dbReference type="InterPro" id="IPR015050">
    <property type="entry name" value="BofC_C"/>
</dbReference>
<dbReference type="InterPro" id="IPR038117">
    <property type="entry name" value="BofC_C_sf"/>
</dbReference>
<dbReference type="InterPro" id="IPR015071">
    <property type="entry name" value="BOFC_N"/>
</dbReference>
<dbReference type="InterPro" id="IPR038118">
    <property type="entry name" value="BOFC_N_sf"/>
</dbReference>
<dbReference type="Pfam" id="PF08955">
    <property type="entry name" value="BofC_C"/>
    <property type="match status" value="1"/>
</dbReference>
<dbReference type="Pfam" id="PF08977">
    <property type="entry name" value="BOFC_N"/>
    <property type="match status" value="1"/>
</dbReference>
<reference key="1">
    <citation type="journal article" date="1997" name="Microbiology">
        <title>BofC encodes a putative forespore regulator of the Bacillus subtilis sigma K checkpoint.</title>
        <authorList>
            <person name="Gomez M."/>
            <person name="Cutting S.M."/>
        </authorList>
    </citation>
    <scope>NUCLEOTIDE SEQUENCE [GENOMIC DNA]</scope>
    <source>
        <strain>168 / PY79</strain>
    </source>
</reference>
<reference key="2">
    <citation type="submission" date="1997-12" db="EMBL/GenBank/DDBJ databases">
        <title>A 17.8 kb segment in the spoVB-nadC region of the Bacillus subtilis 168 chromosome: sequencing and ruv operon identification.</title>
        <authorList>
            <person name="Tosato V."/>
            <person name="Bolotin A."/>
            <person name="Bertani I."/>
            <person name="Valentino I."/>
            <person name="Bruschi C.V."/>
        </authorList>
    </citation>
    <scope>NUCLEOTIDE SEQUENCE [GENOMIC DNA]</scope>
    <source>
        <strain>168</strain>
    </source>
</reference>
<reference key="3">
    <citation type="journal article" date="1997" name="Nature">
        <title>The complete genome sequence of the Gram-positive bacterium Bacillus subtilis.</title>
        <authorList>
            <person name="Kunst F."/>
            <person name="Ogasawara N."/>
            <person name="Moszer I."/>
            <person name="Albertini A.M."/>
            <person name="Alloni G."/>
            <person name="Azevedo V."/>
            <person name="Bertero M.G."/>
            <person name="Bessieres P."/>
            <person name="Bolotin A."/>
            <person name="Borchert S."/>
            <person name="Borriss R."/>
            <person name="Boursier L."/>
            <person name="Brans A."/>
            <person name="Braun M."/>
            <person name="Brignell S.C."/>
            <person name="Bron S."/>
            <person name="Brouillet S."/>
            <person name="Bruschi C.V."/>
            <person name="Caldwell B."/>
            <person name="Capuano V."/>
            <person name="Carter N.M."/>
            <person name="Choi S.-K."/>
            <person name="Codani J.-J."/>
            <person name="Connerton I.F."/>
            <person name="Cummings N.J."/>
            <person name="Daniel R.A."/>
            <person name="Denizot F."/>
            <person name="Devine K.M."/>
            <person name="Duesterhoeft A."/>
            <person name="Ehrlich S.D."/>
            <person name="Emmerson P.T."/>
            <person name="Entian K.-D."/>
            <person name="Errington J."/>
            <person name="Fabret C."/>
            <person name="Ferrari E."/>
            <person name="Foulger D."/>
            <person name="Fritz C."/>
            <person name="Fujita M."/>
            <person name="Fujita Y."/>
            <person name="Fuma S."/>
            <person name="Galizzi A."/>
            <person name="Galleron N."/>
            <person name="Ghim S.-Y."/>
            <person name="Glaser P."/>
            <person name="Goffeau A."/>
            <person name="Golightly E.J."/>
            <person name="Grandi G."/>
            <person name="Guiseppi G."/>
            <person name="Guy B.J."/>
            <person name="Haga K."/>
            <person name="Haiech J."/>
            <person name="Harwood C.R."/>
            <person name="Henaut A."/>
            <person name="Hilbert H."/>
            <person name="Holsappel S."/>
            <person name="Hosono S."/>
            <person name="Hullo M.-F."/>
            <person name="Itaya M."/>
            <person name="Jones L.-M."/>
            <person name="Joris B."/>
            <person name="Karamata D."/>
            <person name="Kasahara Y."/>
            <person name="Klaerr-Blanchard M."/>
            <person name="Klein C."/>
            <person name="Kobayashi Y."/>
            <person name="Koetter P."/>
            <person name="Koningstein G."/>
            <person name="Krogh S."/>
            <person name="Kumano M."/>
            <person name="Kurita K."/>
            <person name="Lapidus A."/>
            <person name="Lardinois S."/>
            <person name="Lauber J."/>
            <person name="Lazarevic V."/>
            <person name="Lee S.-M."/>
            <person name="Levine A."/>
            <person name="Liu H."/>
            <person name="Masuda S."/>
            <person name="Mauel C."/>
            <person name="Medigue C."/>
            <person name="Medina N."/>
            <person name="Mellado R.P."/>
            <person name="Mizuno M."/>
            <person name="Moestl D."/>
            <person name="Nakai S."/>
            <person name="Noback M."/>
            <person name="Noone D."/>
            <person name="O'Reilly M."/>
            <person name="Ogawa K."/>
            <person name="Ogiwara A."/>
            <person name="Oudega B."/>
            <person name="Park S.-H."/>
            <person name="Parro V."/>
            <person name="Pohl T.M."/>
            <person name="Portetelle D."/>
            <person name="Porwollik S."/>
            <person name="Prescott A.M."/>
            <person name="Presecan E."/>
            <person name="Pujic P."/>
            <person name="Purnelle B."/>
            <person name="Rapoport G."/>
            <person name="Rey M."/>
            <person name="Reynolds S."/>
            <person name="Rieger M."/>
            <person name="Rivolta C."/>
            <person name="Rocha E."/>
            <person name="Roche B."/>
            <person name="Rose M."/>
            <person name="Sadaie Y."/>
            <person name="Sato T."/>
            <person name="Scanlan E."/>
            <person name="Schleich S."/>
            <person name="Schroeter R."/>
            <person name="Scoffone F."/>
            <person name="Sekiguchi J."/>
            <person name="Sekowska A."/>
            <person name="Seror S.J."/>
            <person name="Serror P."/>
            <person name="Shin B.-S."/>
            <person name="Soldo B."/>
            <person name="Sorokin A."/>
            <person name="Tacconi E."/>
            <person name="Takagi T."/>
            <person name="Takahashi H."/>
            <person name="Takemaru K."/>
            <person name="Takeuchi M."/>
            <person name="Tamakoshi A."/>
            <person name="Tanaka T."/>
            <person name="Terpstra P."/>
            <person name="Tognoni A."/>
            <person name="Tosato V."/>
            <person name="Uchiyama S."/>
            <person name="Vandenbol M."/>
            <person name="Vannier F."/>
            <person name="Vassarotti A."/>
            <person name="Viari A."/>
            <person name="Wambutt R."/>
            <person name="Wedler E."/>
            <person name="Wedler H."/>
            <person name="Weitzenegger T."/>
            <person name="Winters P."/>
            <person name="Wipat A."/>
            <person name="Yamamoto H."/>
            <person name="Yamane K."/>
            <person name="Yasumoto K."/>
            <person name="Yata K."/>
            <person name="Yoshida K."/>
            <person name="Yoshikawa H.-F."/>
            <person name="Zumstein E."/>
            <person name="Yoshikawa H."/>
            <person name="Danchin A."/>
        </authorList>
    </citation>
    <scope>NUCLEOTIDE SEQUENCE [LARGE SCALE GENOMIC DNA]</scope>
    <source>
        <strain>168</strain>
    </source>
</reference>
<reference key="4">
    <citation type="journal article" date="2005" name="J. Biol. Chem.">
        <title>The structure of bypass of forespore C, an intercompartmental signaling factor during sporulation in Bacillus.</title>
        <authorList>
            <person name="Patterson H.M."/>
            <person name="Brannigan J.A."/>
            <person name="Cutting S.M."/>
            <person name="Wilson K.S."/>
            <person name="Wilkinson A.J."/>
            <person name="Ab E."/>
            <person name="Diercks T."/>
            <person name="de Jong R.N."/>
            <person name="Truffault V."/>
            <person name="Folkers G.E."/>
            <person name="Kaptein R."/>
        </authorList>
    </citation>
    <scope>STRUCTURE BY NMR OF 31-170</scope>
    <scope>SUBUNIT</scope>
</reference>
<proteinExistence type="evidence at protein level"/>
<gene>
    <name type="primary">bofC</name>
    <name type="ordered locus">BSU27750</name>
</gene>
<organism>
    <name type="scientific">Bacillus subtilis (strain 168)</name>
    <dbReference type="NCBI Taxonomy" id="224308"/>
    <lineage>
        <taxon>Bacteria</taxon>
        <taxon>Bacillati</taxon>
        <taxon>Bacillota</taxon>
        <taxon>Bacilli</taxon>
        <taxon>Bacillales</taxon>
        <taxon>Bacillaceae</taxon>
        <taxon>Bacillus</taxon>
    </lineage>
</organism>
<name>BOFC_BACSU</name>
<protein>
    <recommendedName>
        <fullName>Protein BofC</fullName>
    </recommendedName>
    <alternativeName>
        <fullName>Bypass-of-forespore protein C</fullName>
    </alternativeName>
</protein>
<keyword id="KW-0002">3D-structure</keyword>
<keyword id="KW-1185">Reference proteome</keyword>
<keyword id="KW-0732">Signal</keyword>
<keyword id="KW-0749">Sporulation</keyword>